<accession>B3WER9</accession>
<sequence>MSTQSVVETVTALVKPILDDHHFYLTDVEFVKEGGGWYLRVYIDKTGGITLDECVMVSEALSEKLDAMDPDPIPQQYFLEVSSPGAERPLKHETDYEQAVGDYIHVSLFKKLDGKKVFEGTLKELLPDQLTLTVKDKSRKFDQVIDRQLIASARLAIEF</sequence>
<proteinExistence type="inferred from homology"/>
<comment type="function">
    <text evidence="1">Required for maturation of 30S ribosomal subunits.</text>
</comment>
<comment type="subcellular location">
    <subcellularLocation>
        <location evidence="1">Cytoplasm</location>
    </subcellularLocation>
</comment>
<comment type="similarity">
    <text evidence="1">Belongs to the RimP family.</text>
</comment>
<gene>
    <name evidence="1" type="primary">rimP</name>
    <name type="ordered locus">LCABL_17900</name>
</gene>
<reference key="1">
    <citation type="submission" date="2008-06" db="EMBL/GenBank/DDBJ databases">
        <title>Lactobacillus casei BL23 complete genome sequence.</title>
        <authorList>
            <person name="Maze A."/>
            <person name="Boel G."/>
            <person name="Bourand A."/>
            <person name="Loux V."/>
            <person name="Gibrat J.F."/>
            <person name="Zuniga M."/>
            <person name="Hartke A."/>
            <person name="Deutscher J."/>
        </authorList>
    </citation>
    <scope>NUCLEOTIDE SEQUENCE [LARGE SCALE GENOMIC DNA]</scope>
    <source>
        <strain>BL23</strain>
    </source>
</reference>
<keyword id="KW-0963">Cytoplasm</keyword>
<keyword id="KW-0690">Ribosome biogenesis</keyword>
<evidence type="ECO:0000255" key="1">
    <source>
        <dbReference type="HAMAP-Rule" id="MF_01077"/>
    </source>
</evidence>
<organism>
    <name type="scientific">Lacticaseibacillus casei (strain BL23)</name>
    <name type="common">Lactobacillus casei</name>
    <dbReference type="NCBI Taxonomy" id="543734"/>
    <lineage>
        <taxon>Bacteria</taxon>
        <taxon>Bacillati</taxon>
        <taxon>Bacillota</taxon>
        <taxon>Bacilli</taxon>
        <taxon>Lactobacillales</taxon>
        <taxon>Lactobacillaceae</taxon>
        <taxon>Lacticaseibacillus</taxon>
    </lineage>
</organism>
<feature type="chain" id="PRO_0000384691" description="Ribosome maturation factor RimP">
    <location>
        <begin position="1"/>
        <end position="159"/>
    </location>
</feature>
<protein>
    <recommendedName>
        <fullName evidence="1">Ribosome maturation factor RimP</fullName>
    </recommendedName>
</protein>
<dbReference type="EMBL" id="FM177140">
    <property type="protein sequence ID" value="CAQ66870.1"/>
    <property type="molecule type" value="Genomic_DNA"/>
</dbReference>
<dbReference type="SMR" id="B3WER9"/>
<dbReference type="KEGG" id="lcb:LCABL_17900"/>
<dbReference type="HOGENOM" id="CLU_070525_2_0_9"/>
<dbReference type="GO" id="GO:0005829">
    <property type="term" value="C:cytosol"/>
    <property type="evidence" value="ECO:0007669"/>
    <property type="project" value="TreeGrafter"/>
</dbReference>
<dbReference type="GO" id="GO:0000028">
    <property type="term" value="P:ribosomal small subunit assembly"/>
    <property type="evidence" value="ECO:0007669"/>
    <property type="project" value="TreeGrafter"/>
</dbReference>
<dbReference type="GO" id="GO:0006412">
    <property type="term" value="P:translation"/>
    <property type="evidence" value="ECO:0007669"/>
    <property type="project" value="TreeGrafter"/>
</dbReference>
<dbReference type="CDD" id="cd01734">
    <property type="entry name" value="YlxS_C"/>
    <property type="match status" value="1"/>
</dbReference>
<dbReference type="FunFam" id="3.30.300.70:FF:000001">
    <property type="entry name" value="Ribosome maturation factor RimP"/>
    <property type="match status" value="1"/>
</dbReference>
<dbReference type="Gene3D" id="2.30.30.180">
    <property type="entry name" value="Ribosome maturation factor RimP, C-terminal domain"/>
    <property type="match status" value="1"/>
</dbReference>
<dbReference type="Gene3D" id="3.30.300.70">
    <property type="entry name" value="RimP-like superfamily, N-terminal"/>
    <property type="match status" value="1"/>
</dbReference>
<dbReference type="HAMAP" id="MF_01077">
    <property type="entry name" value="RimP"/>
    <property type="match status" value="1"/>
</dbReference>
<dbReference type="InterPro" id="IPR003728">
    <property type="entry name" value="Ribosome_maturation_RimP"/>
</dbReference>
<dbReference type="InterPro" id="IPR028998">
    <property type="entry name" value="RimP_C"/>
</dbReference>
<dbReference type="InterPro" id="IPR036847">
    <property type="entry name" value="RimP_C_sf"/>
</dbReference>
<dbReference type="InterPro" id="IPR028989">
    <property type="entry name" value="RimP_N"/>
</dbReference>
<dbReference type="InterPro" id="IPR035956">
    <property type="entry name" value="RimP_N_sf"/>
</dbReference>
<dbReference type="NCBIfam" id="NF000928">
    <property type="entry name" value="PRK00092.1-2"/>
    <property type="match status" value="1"/>
</dbReference>
<dbReference type="PANTHER" id="PTHR33867">
    <property type="entry name" value="RIBOSOME MATURATION FACTOR RIMP"/>
    <property type="match status" value="1"/>
</dbReference>
<dbReference type="PANTHER" id="PTHR33867:SF1">
    <property type="entry name" value="RIBOSOME MATURATION FACTOR RIMP"/>
    <property type="match status" value="1"/>
</dbReference>
<dbReference type="Pfam" id="PF17384">
    <property type="entry name" value="DUF150_C"/>
    <property type="match status" value="1"/>
</dbReference>
<dbReference type="Pfam" id="PF02576">
    <property type="entry name" value="RimP_N"/>
    <property type="match status" value="1"/>
</dbReference>
<dbReference type="SUPFAM" id="SSF74942">
    <property type="entry name" value="YhbC-like, C-terminal domain"/>
    <property type="match status" value="1"/>
</dbReference>
<dbReference type="SUPFAM" id="SSF75420">
    <property type="entry name" value="YhbC-like, N-terminal domain"/>
    <property type="match status" value="1"/>
</dbReference>
<name>RIMP_LACCB</name>